<name>RL9_HISS1</name>
<keyword id="KW-0687">Ribonucleoprotein</keyword>
<keyword id="KW-0689">Ribosomal protein</keyword>
<keyword id="KW-0694">RNA-binding</keyword>
<keyword id="KW-0699">rRNA-binding</keyword>
<dbReference type="EMBL" id="CP000436">
    <property type="protein sequence ID" value="ABI25710.1"/>
    <property type="molecule type" value="Genomic_DNA"/>
</dbReference>
<dbReference type="SMR" id="Q0I4E8"/>
<dbReference type="KEGG" id="hso:HS_1435"/>
<dbReference type="eggNOG" id="COG0359">
    <property type="taxonomic scope" value="Bacteria"/>
</dbReference>
<dbReference type="HOGENOM" id="CLU_078938_4_1_6"/>
<dbReference type="GO" id="GO:1990904">
    <property type="term" value="C:ribonucleoprotein complex"/>
    <property type="evidence" value="ECO:0007669"/>
    <property type="project" value="UniProtKB-KW"/>
</dbReference>
<dbReference type="GO" id="GO:0005840">
    <property type="term" value="C:ribosome"/>
    <property type="evidence" value="ECO:0007669"/>
    <property type="project" value="UniProtKB-KW"/>
</dbReference>
<dbReference type="GO" id="GO:0019843">
    <property type="term" value="F:rRNA binding"/>
    <property type="evidence" value="ECO:0007669"/>
    <property type="project" value="UniProtKB-UniRule"/>
</dbReference>
<dbReference type="GO" id="GO:0003735">
    <property type="term" value="F:structural constituent of ribosome"/>
    <property type="evidence" value="ECO:0007669"/>
    <property type="project" value="InterPro"/>
</dbReference>
<dbReference type="GO" id="GO:0006412">
    <property type="term" value="P:translation"/>
    <property type="evidence" value="ECO:0007669"/>
    <property type="project" value="UniProtKB-UniRule"/>
</dbReference>
<dbReference type="FunFam" id="3.10.430.100:FF:000001">
    <property type="entry name" value="50S ribosomal protein L9"/>
    <property type="match status" value="1"/>
</dbReference>
<dbReference type="FunFam" id="3.40.5.10:FF:000001">
    <property type="entry name" value="50S ribosomal protein L9"/>
    <property type="match status" value="1"/>
</dbReference>
<dbReference type="Gene3D" id="3.10.430.100">
    <property type="entry name" value="Ribosomal protein L9, C-terminal domain"/>
    <property type="match status" value="1"/>
</dbReference>
<dbReference type="Gene3D" id="3.40.5.10">
    <property type="entry name" value="Ribosomal protein L9, N-terminal domain"/>
    <property type="match status" value="1"/>
</dbReference>
<dbReference type="HAMAP" id="MF_00503">
    <property type="entry name" value="Ribosomal_bL9"/>
    <property type="match status" value="1"/>
</dbReference>
<dbReference type="InterPro" id="IPR000244">
    <property type="entry name" value="Ribosomal_bL9"/>
</dbReference>
<dbReference type="InterPro" id="IPR009027">
    <property type="entry name" value="Ribosomal_bL9/RNase_H1_N"/>
</dbReference>
<dbReference type="InterPro" id="IPR020594">
    <property type="entry name" value="Ribosomal_bL9_bac/chp"/>
</dbReference>
<dbReference type="InterPro" id="IPR020069">
    <property type="entry name" value="Ribosomal_bL9_C"/>
</dbReference>
<dbReference type="InterPro" id="IPR036791">
    <property type="entry name" value="Ribosomal_bL9_C_sf"/>
</dbReference>
<dbReference type="InterPro" id="IPR020070">
    <property type="entry name" value="Ribosomal_bL9_N"/>
</dbReference>
<dbReference type="InterPro" id="IPR036935">
    <property type="entry name" value="Ribosomal_bL9_N_sf"/>
</dbReference>
<dbReference type="NCBIfam" id="TIGR00158">
    <property type="entry name" value="L9"/>
    <property type="match status" value="1"/>
</dbReference>
<dbReference type="PANTHER" id="PTHR21368">
    <property type="entry name" value="50S RIBOSOMAL PROTEIN L9"/>
    <property type="match status" value="1"/>
</dbReference>
<dbReference type="Pfam" id="PF03948">
    <property type="entry name" value="Ribosomal_L9_C"/>
    <property type="match status" value="1"/>
</dbReference>
<dbReference type="Pfam" id="PF01281">
    <property type="entry name" value="Ribosomal_L9_N"/>
    <property type="match status" value="1"/>
</dbReference>
<dbReference type="SUPFAM" id="SSF55658">
    <property type="entry name" value="L9 N-domain-like"/>
    <property type="match status" value="1"/>
</dbReference>
<dbReference type="SUPFAM" id="SSF55653">
    <property type="entry name" value="Ribosomal protein L9 C-domain"/>
    <property type="match status" value="1"/>
</dbReference>
<dbReference type="PROSITE" id="PS00651">
    <property type="entry name" value="RIBOSOMAL_L9"/>
    <property type="match status" value="1"/>
</dbReference>
<feature type="chain" id="PRO_1000014788" description="Large ribosomal subunit protein bL9">
    <location>
        <begin position="1"/>
        <end position="149"/>
    </location>
</feature>
<reference key="1">
    <citation type="journal article" date="2007" name="J. Bacteriol.">
        <title>Complete genome sequence of Haemophilus somnus (Histophilus somni) strain 129Pt and comparison to Haemophilus ducreyi 35000HP and Haemophilus influenzae Rd.</title>
        <authorList>
            <person name="Challacombe J.F."/>
            <person name="Duncan A.J."/>
            <person name="Brettin T.S."/>
            <person name="Bruce D."/>
            <person name="Chertkov O."/>
            <person name="Detter J.C."/>
            <person name="Han C.S."/>
            <person name="Misra M."/>
            <person name="Richardson P."/>
            <person name="Tapia R."/>
            <person name="Thayer N."/>
            <person name="Xie G."/>
            <person name="Inzana T.J."/>
        </authorList>
    </citation>
    <scope>NUCLEOTIDE SEQUENCE [LARGE SCALE GENOMIC DNA]</scope>
    <source>
        <strain>129Pt</strain>
    </source>
</reference>
<proteinExistence type="inferred from homology"/>
<evidence type="ECO:0000255" key="1">
    <source>
        <dbReference type="HAMAP-Rule" id="MF_00503"/>
    </source>
</evidence>
<evidence type="ECO:0000305" key="2"/>
<accession>Q0I4E8</accession>
<gene>
    <name evidence="1" type="primary">rplI</name>
    <name type="ordered locus">HS_1435</name>
</gene>
<organism>
    <name type="scientific">Histophilus somni (strain 129Pt)</name>
    <name type="common">Haemophilus somnus</name>
    <dbReference type="NCBI Taxonomy" id="205914"/>
    <lineage>
        <taxon>Bacteria</taxon>
        <taxon>Pseudomonadati</taxon>
        <taxon>Pseudomonadota</taxon>
        <taxon>Gammaproteobacteria</taxon>
        <taxon>Pasteurellales</taxon>
        <taxon>Pasteurellaceae</taxon>
        <taxon>Histophilus</taxon>
    </lineage>
</organism>
<protein>
    <recommendedName>
        <fullName evidence="1">Large ribosomal subunit protein bL9</fullName>
    </recommendedName>
    <alternativeName>
        <fullName evidence="2">50S ribosomal protein L9</fullName>
    </alternativeName>
</protein>
<comment type="function">
    <text evidence="1">Binds to the 23S rRNA.</text>
</comment>
<comment type="similarity">
    <text evidence="1">Belongs to the bacterial ribosomal protein bL9 family.</text>
</comment>
<sequence>MQVILLDKIAHLGNVGDQVSVKAGFARNFLIPQGKAVMATQANIEYFESRRAELERKAAEVLATAQARANQLAELATVTITSKAGDEGRLFGSITARDVAEAVTAAGVEIAKSEVRLSTGPLRTTGEHQVRFQLHGEVFATLNVVIVAE</sequence>